<reference key="1">
    <citation type="journal article" date="1999" name="Science">
        <title>Genome sequence of the radioresistant bacterium Deinococcus radiodurans R1.</title>
        <authorList>
            <person name="White O."/>
            <person name="Eisen J.A."/>
            <person name="Heidelberg J.F."/>
            <person name="Hickey E.K."/>
            <person name="Peterson J.D."/>
            <person name="Dodson R.J."/>
            <person name="Haft D.H."/>
            <person name="Gwinn M.L."/>
            <person name="Nelson W.C."/>
            <person name="Richardson D.L."/>
            <person name="Moffat K.S."/>
            <person name="Qin H."/>
            <person name="Jiang L."/>
            <person name="Pamphile W."/>
            <person name="Crosby M."/>
            <person name="Shen M."/>
            <person name="Vamathevan J.J."/>
            <person name="Lam P."/>
            <person name="McDonald L.A."/>
            <person name="Utterback T.R."/>
            <person name="Zalewski C."/>
            <person name="Makarova K.S."/>
            <person name="Aravind L."/>
            <person name="Daly M.J."/>
            <person name="Minton K.W."/>
            <person name="Fleischmann R.D."/>
            <person name="Ketchum K.A."/>
            <person name="Nelson K.E."/>
            <person name="Salzberg S.L."/>
            <person name="Smith H.O."/>
            <person name="Venter J.C."/>
            <person name="Fraser C.M."/>
        </authorList>
    </citation>
    <scope>NUCLEOTIDE SEQUENCE [LARGE SCALE GENOMIC DNA]</scope>
    <source>
        <strain>ATCC 13939 / DSM 20539 / JCM 16871 / CCUG 27074 / LMG 4051 / NBRC 15346 / NCIMB 9279 / VKM B-1422 / R1</strain>
    </source>
</reference>
<evidence type="ECO:0000255" key="1">
    <source>
        <dbReference type="HAMAP-Rule" id="MF_00213"/>
    </source>
</evidence>
<evidence type="ECO:0000305" key="2"/>
<dbReference type="EMBL" id="AE001825">
    <property type="protein sequence ID" value="AAF12463.1"/>
    <property type="molecule type" value="Genomic_DNA"/>
</dbReference>
<dbReference type="PIR" id="A75586">
    <property type="entry name" value="A75586"/>
</dbReference>
<dbReference type="RefSeq" id="NP_285639.1">
    <property type="nucleotide sequence ID" value="NC_001264.1"/>
</dbReference>
<dbReference type="RefSeq" id="WP_010889575.1">
    <property type="nucleotide sequence ID" value="NC_001264.1"/>
</dbReference>
<dbReference type="SMR" id="Q9RYJ6"/>
<dbReference type="STRING" id="243230.DR_A0316"/>
<dbReference type="PaxDb" id="243230-DR_A0316"/>
<dbReference type="EnsemblBacteria" id="AAF12463">
    <property type="protein sequence ID" value="AAF12463"/>
    <property type="gene ID" value="DR_A0316"/>
</dbReference>
<dbReference type="GeneID" id="69519200"/>
<dbReference type="KEGG" id="dra:DR_A0316"/>
<dbReference type="PATRIC" id="fig|243230.17.peg.3206"/>
<dbReference type="eggNOG" id="COG0375">
    <property type="taxonomic scope" value="Bacteria"/>
</dbReference>
<dbReference type="HOGENOM" id="CLU_126929_3_0_0"/>
<dbReference type="InParanoid" id="Q9RYJ6"/>
<dbReference type="OrthoDB" id="9800361at2"/>
<dbReference type="Proteomes" id="UP000002524">
    <property type="component" value="Chromosome 2"/>
</dbReference>
<dbReference type="GO" id="GO:0016151">
    <property type="term" value="F:nickel cation binding"/>
    <property type="evidence" value="ECO:0000318"/>
    <property type="project" value="GO_Central"/>
</dbReference>
<dbReference type="GO" id="GO:0008270">
    <property type="term" value="F:zinc ion binding"/>
    <property type="evidence" value="ECO:0000318"/>
    <property type="project" value="GO_Central"/>
</dbReference>
<dbReference type="GO" id="GO:0051604">
    <property type="term" value="P:protein maturation"/>
    <property type="evidence" value="ECO:0000318"/>
    <property type="project" value="GO_Central"/>
</dbReference>
<dbReference type="GO" id="GO:0036211">
    <property type="term" value="P:protein modification process"/>
    <property type="evidence" value="ECO:0007669"/>
    <property type="project" value="UniProtKB-UniRule"/>
</dbReference>
<dbReference type="Gene3D" id="3.30.2320.80">
    <property type="match status" value="1"/>
</dbReference>
<dbReference type="HAMAP" id="MF_00213">
    <property type="entry name" value="HypA_HybF"/>
    <property type="match status" value="1"/>
</dbReference>
<dbReference type="InterPro" id="IPR020538">
    <property type="entry name" value="Hydgase_Ni_incorp_HypA/HybF_CS"/>
</dbReference>
<dbReference type="InterPro" id="IPR000688">
    <property type="entry name" value="HypA/HybF"/>
</dbReference>
<dbReference type="PANTHER" id="PTHR34535">
    <property type="entry name" value="HYDROGENASE MATURATION FACTOR HYPA"/>
    <property type="match status" value="1"/>
</dbReference>
<dbReference type="PANTHER" id="PTHR34535:SF3">
    <property type="entry name" value="HYDROGENASE MATURATION FACTOR HYPA"/>
    <property type="match status" value="1"/>
</dbReference>
<dbReference type="Pfam" id="PF01155">
    <property type="entry name" value="HypA"/>
    <property type="match status" value="1"/>
</dbReference>
<dbReference type="PIRSF" id="PIRSF004761">
    <property type="entry name" value="Hydrgn_mat_HypA"/>
    <property type="match status" value="1"/>
</dbReference>
<dbReference type="PROSITE" id="PS01249">
    <property type="entry name" value="HYPA"/>
    <property type="match status" value="1"/>
</dbReference>
<name>HYPA_DEIRA</name>
<keyword id="KW-0479">Metal-binding</keyword>
<keyword id="KW-0533">Nickel</keyword>
<keyword id="KW-1185">Reference proteome</keyword>
<keyword id="KW-0862">Zinc</keyword>
<comment type="function">
    <text evidence="1">Involved in the maturation of [NiFe] hydrogenases. Required for nickel insertion into the metal center of the hydrogenase.</text>
</comment>
<comment type="similarity">
    <text evidence="1 2">Belongs to the HypA/HybF family.</text>
</comment>
<sequence>MHEASIALALIDVAGDVLREHGAARASALTVRVGQWSSVVPEALAAAFPACAEGTPLAGARLSIERVPGVGECPQHGPVELEVWRGLRCPLCGAPTPRLLQGDELELDQLELDQLELENL</sequence>
<protein>
    <recommendedName>
        <fullName evidence="1">Hydrogenase maturation factor HypA</fullName>
    </recommendedName>
</protein>
<feature type="chain" id="PRO_0000129074" description="Hydrogenase maturation factor HypA">
    <location>
        <begin position="1"/>
        <end position="120"/>
    </location>
</feature>
<feature type="binding site" evidence="1">
    <location>
        <position position="2"/>
    </location>
    <ligand>
        <name>Ni(2+)</name>
        <dbReference type="ChEBI" id="CHEBI:49786"/>
    </ligand>
</feature>
<feature type="binding site" evidence="1">
    <location>
        <position position="73"/>
    </location>
    <ligand>
        <name>Zn(2+)</name>
        <dbReference type="ChEBI" id="CHEBI:29105"/>
    </ligand>
</feature>
<feature type="binding site" evidence="1">
    <location>
        <position position="76"/>
    </location>
    <ligand>
        <name>Zn(2+)</name>
        <dbReference type="ChEBI" id="CHEBI:29105"/>
    </ligand>
</feature>
<feature type="binding site" evidence="1">
    <location>
        <position position="89"/>
    </location>
    <ligand>
        <name>Zn(2+)</name>
        <dbReference type="ChEBI" id="CHEBI:29105"/>
    </ligand>
</feature>
<feature type="binding site" evidence="1">
    <location>
        <position position="92"/>
    </location>
    <ligand>
        <name>Zn(2+)</name>
        <dbReference type="ChEBI" id="CHEBI:29105"/>
    </ligand>
</feature>
<proteinExistence type="inferred from homology"/>
<accession>Q9RYJ6</accession>
<organism>
    <name type="scientific">Deinococcus radiodurans (strain ATCC 13939 / DSM 20539 / JCM 16871 / CCUG 27074 / LMG 4051 / NBRC 15346 / NCIMB 9279 / VKM B-1422 / R1)</name>
    <dbReference type="NCBI Taxonomy" id="243230"/>
    <lineage>
        <taxon>Bacteria</taxon>
        <taxon>Thermotogati</taxon>
        <taxon>Deinococcota</taxon>
        <taxon>Deinococci</taxon>
        <taxon>Deinococcales</taxon>
        <taxon>Deinococcaceae</taxon>
        <taxon>Deinococcus</taxon>
    </lineage>
</organism>
<gene>
    <name evidence="1" type="primary">hypA</name>
    <name type="ordered locus">DR_A0316</name>
</gene>